<comment type="function">
    <text evidence="1">Functions in the biosynthesis of branched-chain amino acids. Catalyzes the dehydration of (2R,3R)-2,3-dihydroxy-3-methylpentanoate (2,3-dihydroxy-3-methylvalerate) into 2-oxo-3-methylpentanoate (2-oxo-3-methylvalerate) and of (2R)-2,3-dihydroxy-3-methylbutanoate (2,3-dihydroxyisovalerate) into 2-oxo-3-methylbutanoate (2-oxoisovalerate), the penultimate precursor to L-isoleucine and L-valine, respectively.</text>
</comment>
<comment type="catalytic activity">
    <reaction evidence="1">
        <text>(2R)-2,3-dihydroxy-3-methylbutanoate = 3-methyl-2-oxobutanoate + H2O</text>
        <dbReference type="Rhea" id="RHEA:24809"/>
        <dbReference type="ChEBI" id="CHEBI:11851"/>
        <dbReference type="ChEBI" id="CHEBI:15377"/>
        <dbReference type="ChEBI" id="CHEBI:49072"/>
        <dbReference type="EC" id="4.2.1.9"/>
    </reaction>
    <physiologicalReaction direction="left-to-right" evidence="1">
        <dbReference type="Rhea" id="RHEA:24810"/>
    </physiologicalReaction>
</comment>
<comment type="catalytic activity">
    <reaction evidence="1">
        <text>(2R,3R)-2,3-dihydroxy-3-methylpentanoate = (S)-3-methyl-2-oxopentanoate + H2O</text>
        <dbReference type="Rhea" id="RHEA:27694"/>
        <dbReference type="ChEBI" id="CHEBI:15377"/>
        <dbReference type="ChEBI" id="CHEBI:35146"/>
        <dbReference type="ChEBI" id="CHEBI:49258"/>
        <dbReference type="EC" id="4.2.1.9"/>
    </reaction>
    <physiologicalReaction direction="left-to-right" evidence="1">
        <dbReference type="Rhea" id="RHEA:27695"/>
    </physiologicalReaction>
</comment>
<comment type="cofactor">
    <cofactor evidence="1">
        <name>[2Fe-2S] cluster</name>
        <dbReference type="ChEBI" id="CHEBI:190135"/>
    </cofactor>
    <text evidence="1">Binds 1 [2Fe-2S] cluster per subunit. This cluster acts as a Lewis acid cofactor.</text>
</comment>
<comment type="cofactor">
    <cofactor evidence="1">
        <name>Mg(2+)</name>
        <dbReference type="ChEBI" id="CHEBI:18420"/>
    </cofactor>
</comment>
<comment type="pathway">
    <text evidence="1">Amino-acid biosynthesis; L-isoleucine biosynthesis; L-isoleucine from 2-oxobutanoate: step 3/4.</text>
</comment>
<comment type="pathway">
    <text evidence="1">Amino-acid biosynthesis; L-valine biosynthesis; L-valine from pyruvate: step 3/4.</text>
</comment>
<comment type="subunit">
    <text evidence="1">Homodimer.</text>
</comment>
<comment type="similarity">
    <text evidence="1">Belongs to the IlvD/Edd family.</text>
</comment>
<reference key="1">
    <citation type="submission" date="2008-02" db="EMBL/GenBank/DDBJ databases">
        <title>Complete sequence of Yersinia pseudotuberculosis YPIII.</title>
        <authorList>
            <consortium name="US DOE Joint Genome Institute"/>
            <person name="Copeland A."/>
            <person name="Lucas S."/>
            <person name="Lapidus A."/>
            <person name="Glavina del Rio T."/>
            <person name="Dalin E."/>
            <person name="Tice H."/>
            <person name="Bruce D."/>
            <person name="Goodwin L."/>
            <person name="Pitluck S."/>
            <person name="Munk A.C."/>
            <person name="Brettin T."/>
            <person name="Detter J.C."/>
            <person name="Han C."/>
            <person name="Tapia R."/>
            <person name="Schmutz J."/>
            <person name="Larimer F."/>
            <person name="Land M."/>
            <person name="Hauser L."/>
            <person name="Challacombe J.F."/>
            <person name="Green L."/>
            <person name="Lindler L.E."/>
            <person name="Nikolich M.P."/>
            <person name="Richardson P."/>
        </authorList>
    </citation>
    <scope>NUCLEOTIDE SEQUENCE [LARGE SCALE GENOMIC DNA]</scope>
    <source>
        <strain>YPIII</strain>
    </source>
</reference>
<name>ILVD_YERPY</name>
<proteinExistence type="inferred from homology"/>
<accession>B1JQ32</accession>
<sequence>MPKYRSHTTTHGRNMAGARALWRATGMTDDDFGKPIIAVVNSFTQFVPGHVHLRDLGKLVAEQIVASGGVAKEFNTIAVDDGIAMGHGGMLYSLPSRELIADSVEYMVNAHCADAMVCISNCDKITPGMLMASLRLNIPVIFVSGGPMEAGKTKLSDKIIKLDLIDAMIQGANPNVSDEESAQIERSACPTCGSCSGMFTANSMNCLNEALGLALPGNGSLLATHADRKQLFLDAGKHIVALTKRYYEQDDVSALPRNIANKAAFENAMILDIAMGGSTNTVLHLLAAAQEGEIDFSMTDIDHLSRKVPHLCKVAPSTQKYHMEDVHRAGGVIGILGELDRAGLLNRDVSNVLGLNLTQTLEAYDVMLTQDEGVKQMYAAGPAGIRTTKAFSQDCRYPSLDTDREEGCIRTREHAYSQDGGLAVLYGNIAADGCIVKTAGVDKDSLTFRGPAKVFESQDEAVEAILGGKVVAGDVVVIRYEGPKGGPGMQEMLYPTTYLKSMGLGKSCALLTDGRFSGGTSGLSIGHVSPEAASGGLIGLVQDGDFINIDIPNRGIVLDVSEAELAARRETEEAHGDAAWSPKGRERQVSYALRAYAMLATSADKGAVRDKSKLGG</sequence>
<keyword id="KW-0001">2Fe-2S</keyword>
<keyword id="KW-0028">Amino-acid biosynthesis</keyword>
<keyword id="KW-0100">Branched-chain amino acid biosynthesis</keyword>
<keyword id="KW-0408">Iron</keyword>
<keyword id="KW-0411">Iron-sulfur</keyword>
<keyword id="KW-0456">Lyase</keyword>
<keyword id="KW-0460">Magnesium</keyword>
<keyword id="KW-0479">Metal-binding</keyword>
<protein>
    <recommendedName>
        <fullName evidence="1">Dihydroxy-acid dehydratase</fullName>
        <shortName evidence="1">DAD</shortName>
        <ecNumber evidence="1">4.2.1.9</ecNumber>
    </recommendedName>
</protein>
<feature type="chain" id="PRO_1000089436" description="Dihydroxy-acid dehydratase">
    <location>
        <begin position="1"/>
        <end position="616"/>
    </location>
</feature>
<feature type="active site" description="Proton acceptor" evidence="1">
    <location>
        <position position="517"/>
    </location>
</feature>
<feature type="binding site" evidence="1">
    <location>
        <position position="81"/>
    </location>
    <ligand>
        <name>Mg(2+)</name>
        <dbReference type="ChEBI" id="CHEBI:18420"/>
    </ligand>
</feature>
<feature type="binding site" evidence="1">
    <location>
        <position position="122"/>
    </location>
    <ligand>
        <name>[2Fe-2S] cluster</name>
        <dbReference type="ChEBI" id="CHEBI:190135"/>
    </ligand>
</feature>
<feature type="binding site" evidence="1">
    <location>
        <position position="123"/>
    </location>
    <ligand>
        <name>Mg(2+)</name>
        <dbReference type="ChEBI" id="CHEBI:18420"/>
    </ligand>
</feature>
<feature type="binding site" description="via carbamate group" evidence="1">
    <location>
        <position position="124"/>
    </location>
    <ligand>
        <name>Mg(2+)</name>
        <dbReference type="ChEBI" id="CHEBI:18420"/>
    </ligand>
</feature>
<feature type="binding site" evidence="1">
    <location>
        <position position="195"/>
    </location>
    <ligand>
        <name>[2Fe-2S] cluster</name>
        <dbReference type="ChEBI" id="CHEBI:190135"/>
    </ligand>
</feature>
<feature type="binding site" evidence="1">
    <location>
        <position position="491"/>
    </location>
    <ligand>
        <name>Mg(2+)</name>
        <dbReference type="ChEBI" id="CHEBI:18420"/>
    </ligand>
</feature>
<feature type="modified residue" description="N6-carboxylysine" evidence="1">
    <location>
        <position position="124"/>
    </location>
</feature>
<gene>
    <name evidence="1" type="primary">ilvD</name>
    <name type="ordered locus">YPK_4057</name>
</gene>
<evidence type="ECO:0000255" key="1">
    <source>
        <dbReference type="HAMAP-Rule" id="MF_00012"/>
    </source>
</evidence>
<dbReference type="EC" id="4.2.1.9" evidence="1"/>
<dbReference type="EMBL" id="CP000950">
    <property type="protein sequence ID" value="ACA70319.1"/>
    <property type="molecule type" value="Genomic_DNA"/>
</dbReference>
<dbReference type="RefSeq" id="WP_002212014.1">
    <property type="nucleotide sequence ID" value="NZ_CP009792.1"/>
</dbReference>
<dbReference type="SMR" id="B1JQ32"/>
<dbReference type="GeneID" id="57974808"/>
<dbReference type="KEGG" id="ypy:YPK_4057"/>
<dbReference type="PATRIC" id="fig|502800.11.peg.408"/>
<dbReference type="UniPathway" id="UPA00047">
    <property type="reaction ID" value="UER00057"/>
</dbReference>
<dbReference type="UniPathway" id="UPA00049">
    <property type="reaction ID" value="UER00061"/>
</dbReference>
<dbReference type="GO" id="GO:0005829">
    <property type="term" value="C:cytosol"/>
    <property type="evidence" value="ECO:0007669"/>
    <property type="project" value="TreeGrafter"/>
</dbReference>
<dbReference type="GO" id="GO:0051537">
    <property type="term" value="F:2 iron, 2 sulfur cluster binding"/>
    <property type="evidence" value="ECO:0007669"/>
    <property type="project" value="UniProtKB-UniRule"/>
</dbReference>
<dbReference type="GO" id="GO:0004160">
    <property type="term" value="F:dihydroxy-acid dehydratase activity"/>
    <property type="evidence" value="ECO:0007669"/>
    <property type="project" value="UniProtKB-UniRule"/>
</dbReference>
<dbReference type="GO" id="GO:0000287">
    <property type="term" value="F:magnesium ion binding"/>
    <property type="evidence" value="ECO:0007669"/>
    <property type="project" value="UniProtKB-UniRule"/>
</dbReference>
<dbReference type="GO" id="GO:0009097">
    <property type="term" value="P:isoleucine biosynthetic process"/>
    <property type="evidence" value="ECO:0007669"/>
    <property type="project" value="UniProtKB-UniRule"/>
</dbReference>
<dbReference type="GO" id="GO:0009099">
    <property type="term" value="P:L-valine biosynthetic process"/>
    <property type="evidence" value="ECO:0007669"/>
    <property type="project" value="UniProtKB-UniRule"/>
</dbReference>
<dbReference type="FunFam" id="3.50.30.80:FF:000001">
    <property type="entry name" value="Dihydroxy-acid dehydratase"/>
    <property type="match status" value="1"/>
</dbReference>
<dbReference type="Gene3D" id="3.50.30.80">
    <property type="entry name" value="IlvD/EDD C-terminal domain-like"/>
    <property type="match status" value="1"/>
</dbReference>
<dbReference type="HAMAP" id="MF_00012">
    <property type="entry name" value="IlvD"/>
    <property type="match status" value="1"/>
</dbReference>
<dbReference type="InterPro" id="IPR042096">
    <property type="entry name" value="Dihydro-acid_dehy_C"/>
</dbReference>
<dbReference type="InterPro" id="IPR004404">
    <property type="entry name" value="DihydroxyA_deHydtase"/>
</dbReference>
<dbReference type="InterPro" id="IPR020558">
    <property type="entry name" value="DiOHA_6PGluconate_deHydtase_CS"/>
</dbReference>
<dbReference type="InterPro" id="IPR056740">
    <property type="entry name" value="ILV_EDD_C"/>
</dbReference>
<dbReference type="InterPro" id="IPR000581">
    <property type="entry name" value="ILV_EDD_N"/>
</dbReference>
<dbReference type="InterPro" id="IPR037237">
    <property type="entry name" value="IlvD/EDD_N"/>
</dbReference>
<dbReference type="NCBIfam" id="TIGR00110">
    <property type="entry name" value="ilvD"/>
    <property type="match status" value="1"/>
</dbReference>
<dbReference type="NCBIfam" id="NF009103">
    <property type="entry name" value="PRK12448.1"/>
    <property type="match status" value="1"/>
</dbReference>
<dbReference type="PANTHER" id="PTHR43661">
    <property type="entry name" value="D-XYLONATE DEHYDRATASE"/>
    <property type="match status" value="1"/>
</dbReference>
<dbReference type="PANTHER" id="PTHR43661:SF3">
    <property type="entry name" value="D-XYLONATE DEHYDRATASE YAGF-RELATED"/>
    <property type="match status" value="1"/>
</dbReference>
<dbReference type="Pfam" id="PF24877">
    <property type="entry name" value="ILV_EDD_C"/>
    <property type="match status" value="1"/>
</dbReference>
<dbReference type="Pfam" id="PF00920">
    <property type="entry name" value="ILVD_EDD_N"/>
    <property type="match status" value="1"/>
</dbReference>
<dbReference type="SUPFAM" id="SSF143975">
    <property type="entry name" value="IlvD/EDD N-terminal domain-like"/>
    <property type="match status" value="1"/>
</dbReference>
<dbReference type="SUPFAM" id="SSF52016">
    <property type="entry name" value="LeuD/IlvD-like"/>
    <property type="match status" value="1"/>
</dbReference>
<dbReference type="PROSITE" id="PS00886">
    <property type="entry name" value="ILVD_EDD_1"/>
    <property type="match status" value="1"/>
</dbReference>
<dbReference type="PROSITE" id="PS00887">
    <property type="entry name" value="ILVD_EDD_2"/>
    <property type="match status" value="1"/>
</dbReference>
<organism>
    <name type="scientific">Yersinia pseudotuberculosis serotype O:3 (strain YPIII)</name>
    <dbReference type="NCBI Taxonomy" id="502800"/>
    <lineage>
        <taxon>Bacteria</taxon>
        <taxon>Pseudomonadati</taxon>
        <taxon>Pseudomonadota</taxon>
        <taxon>Gammaproteobacteria</taxon>
        <taxon>Enterobacterales</taxon>
        <taxon>Yersiniaceae</taxon>
        <taxon>Yersinia</taxon>
    </lineage>
</organism>